<accession>Q250N2</accession>
<name>RL3_DESHY</name>
<evidence type="ECO:0000255" key="1">
    <source>
        <dbReference type="HAMAP-Rule" id="MF_01325"/>
    </source>
</evidence>
<evidence type="ECO:0000256" key="2">
    <source>
        <dbReference type="SAM" id="MobiDB-lite"/>
    </source>
</evidence>
<evidence type="ECO:0000305" key="3"/>
<feature type="chain" id="PRO_0000353601" description="Large ribosomal subunit protein uL3">
    <location>
        <begin position="1"/>
        <end position="212"/>
    </location>
</feature>
<feature type="region of interest" description="Disordered" evidence="2">
    <location>
        <begin position="128"/>
        <end position="164"/>
    </location>
</feature>
<feature type="compositionally biased region" description="Basic residues" evidence="2">
    <location>
        <begin position="128"/>
        <end position="146"/>
    </location>
</feature>
<dbReference type="EMBL" id="AP008230">
    <property type="protein sequence ID" value="BAE82260.1"/>
    <property type="molecule type" value="Genomic_DNA"/>
</dbReference>
<dbReference type="SMR" id="Q250N2"/>
<dbReference type="STRING" id="138119.DSY0471"/>
<dbReference type="KEGG" id="dsy:DSY0471"/>
<dbReference type="eggNOG" id="COG0087">
    <property type="taxonomic scope" value="Bacteria"/>
</dbReference>
<dbReference type="HOGENOM" id="CLU_044142_4_1_9"/>
<dbReference type="Proteomes" id="UP000001946">
    <property type="component" value="Chromosome"/>
</dbReference>
<dbReference type="GO" id="GO:0022625">
    <property type="term" value="C:cytosolic large ribosomal subunit"/>
    <property type="evidence" value="ECO:0007669"/>
    <property type="project" value="TreeGrafter"/>
</dbReference>
<dbReference type="GO" id="GO:0019843">
    <property type="term" value="F:rRNA binding"/>
    <property type="evidence" value="ECO:0007669"/>
    <property type="project" value="UniProtKB-UniRule"/>
</dbReference>
<dbReference type="GO" id="GO:0003735">
    <property type="term" value="F:structural constituent of ribosome"/>
    <property type="evidence" value="ECO:0007669"/>
    <property type="project" value="InterPro"/>
</dbReference>
<dbReference type="GO" id="GO:0006412">
    <property type="term" value="P:translation"/>
    <property type="evidence" value="ECO:0007669"/>
    <property type="project" value="UniProtKB-UniRule"/>
</dbReference>
<dbReference type="FunFam" id="2.40.30.10:FF:000004">
    <property type="entry name" value="50S ribosomal protein L3"/>
    <property type="match status" value="1"/>
</dbReference>
<dbReference type="FunFam" id="3.30.160.810:FF:000002">
    <property type="entry name" value="50S ribosomal protein L3"/>
    <property type="match status" value="1"/>
</dbReference>
<dbReference type="Gene3D" id="3.30.160.810">
    <property type="match status" value="1"/>
</dbReference>
<dbReference type="Gene3D" id="2.40.30.10">
    <property type="entry name" value="Translation factors"/>
    <property type="match status" value="1"/>
</dbReference>
<dbReference type="HAMAP" id="MF_01325_B">
    <property type="entry name" value="Ribosomal_uL3_B"/>
    <property type="match status" value="1"/>
</dbReference>
<dbReference type="InterPro" id="IPR000597">
    <property type="entry name" value="Ribosomal_uL3"/>
</dbReference>
<dbReference type="InterPro" id="IPR019927">
    <property type="entry name" value="Ribosomal_uL3_bac/org-type"/>
</dbReference>
<dbReference type="InterPro" id="IPR019926">
    <property type="entry name" value="Ribosomal_uL3_CS"/>
</dbReference>
<dbReference type="InterPro" id="IPR009000">
    <property type="entry name" value="Transl_B-barrel_sf"/>
</dbReference>
<dbReference type="NCBIfam" id="TIGR03625">
    <property type="entry name" value="L3_bact"/>
    <property type="match status" value="1"/>
</dbReference>
<dbReference type="PANTHER" id="PTHR11229">
    <property type="entry name" value="50S RIBOSOMAL PROTEIN L3"/>
    <property type="match status" value="1"/>
</dbReference>
<dbReference type="PANTHER" id="PTHR11229:SF16">
    <property type="entry name" value="LARGE RIBOSOMAL SUBUNIT PROTEIN UL3C"/>
    <property type="match status" value="1"/>
</dbReference>
<dbReference type="Pfam" id="PF00297">
    <property type="entry name" value="Ribosomal_L3"/>
    <property type="match status" value="1"/>
</dbReference>
<dbReference type="SUPFAM" id="SSF50447">
    <property type="entry name" value="Translation proteins"/>
    <property type="match status" value="1"/>
</dbReference>
<dbReference type="PROSITE" id="PS00474">
    <property type="entry name" value="RIBOSOMAL_L3"/>
    <property type="match status" value="1"/>
</dbReference>
<proteinExistence type="inferred from homology"/>
<comment type="function">
    <text evidence="1">One of the primary rRNA binding proteins, it binds directly near the 3'-end of the 23S rRNA, where it nucleates assembly of the 50S subunit.</text>
</comment>
<comment type="subunit">
    <text evidence="1">Part of the 50S ribosomal subunit. Forms a cluster with proteins L14 and L19.</text>
</comment>
<comment type="similarity">
    <text evidence="1">Belongs to the universal ribosomal protein uL3 family.</text>
</comment>
<sequence>MAIVSKGILGKKVGMTQVFTEEGHLIPVTVVEAGPCYVIQKKTKATDGYNAIQVGFGALRERLANKPQKGHVAKASVKPMRYIREFRVDDVEAYEIGQVITAELFAAGDAVDVVGISKGKGFAGMIKRHGASRGPMKHGSKYHRRTGSLGAKGPARVFKGRNLPGRMGGERVTVQNLKVVRVDADKNMILVKGAVPGAKKSLLILKPSVKAK</sequence>
<reference key="1">
    <citation type="journal article" date="2006" name="J. Bacteriol.">
        <title>Complete genome sequence of the dehalorespiring bacterium Desulfitobacterium hafniense Y51 and comparison with Dehalococcoides ethenogenes 195.</title>
        <authorList>
            <person name="Nonaka H."/>
            <person name="Keresztes G."/>
            <person name="Shinoda Y."/>
            <person name="Ikenaga Y."/>
            <person name="Abe M."/>
            <person name="Naito K."/>
            <person name="Inatomi K."/>
            <person name="Furukawa K."/>
            <person name="Inui M."/>
            <person name="Yukawa H."/>
        </authorList>
    </citation>
    <scope>NUCLEOTIDE SEQUENCE [LARGE SCALE GENOMIC DNA]</scope>
    <source>
        <strain>Y51</strain>
    </source>
</reference>
<keyword id="KW-1185">Reference proteome</keyword>
<keyword id="KW-0687">Ribonucleoprotein</keyword>
<keyword id="KW-0689">Ribosomal protein</keyword>
<keyword id="KW-0694">RNA-binding</keyword>
<keyword id="KW-0699">rRNA-binding</keyword>
<gene>
    <name evidence="1" type="primary">rplC</name>
    <name type="ordered locus">DSY0471</name>
</gene>
<protein>
    <recommendedName>
        <fullName evidence="1">Large ribosomal subunit protein uL3</fullName>
    </recommendedName>
    <alternativeName>
        <fullName evidence="3">50S ribosomal protein L3</fullName>
    </alternativeName>
</protein>
<organism>
    <name type="scientific">Desulfitobacterium hafniense (strain Y51)</name>
    <dbReference type="NCBI Taxonomy" id="138119"/>
    <lineage>
        <taxon>Bacteria</taxon>
        <taxon>Bacillati</taxon>
        <taxon>Bacillota</taxon>
        <taxon>Clostridia</taxon>
        <taxon>Eubacteriales</taxon>
        <taxon>Desulfitobacteriaceae</taxon>
        <taxon>Desulfitobacterium</taxon>
    </lineage>
</organism>